<comment type="function">
    <text evidence="1 6">RNA-binding protein that plays a role in the regulation of alternative splicing and influences mRNA splice site selection and exon inclusion. Its phosphorylation by FYN inhibits its ability to regulate splice site selection. Induces an increased concentration-dependent incorporation of exon in CD44 pre-mRNA by direct binding to purine-rich exonic enhancer. May function as an adapter protein for Src kinases during mitosis (By similarity). Binds both poly(A) and poly(U) homopolymers (By similarity). Phosphorylation by PTK6 inhibits its RNA-binding ability (By similarity).</text>
</comment>
<comment type="subunit">
    <text evidence="1 6 7">Self-associates to form homooligomers. Interacts with SAFB, SFRS9 and YTHDC1. Found in a complex with KHDRBS1, KHDRBS2 and KHDRBS3. Interacts with RBMX (By similarity). Interacts with the SH3 domains of FYN and PLCG1 (By similarity). Interacts with the SH2 domains of FYN, GRAP2, PLCG1 and RASA1 (By similarity). Interacts with RBMX.</text>
</comment>
<comment type="subcellular location">
    <subcellularLocation>
        <location evidence="3">Nucleus</location>
    </subcellularLocation>
</comment>
<comment type="tissue specificity">
    <text evidence="6">Expressed in the cortex, cerebellum, striatum, midbrain, brainstem and thalamus of the brain (at protein level). Expressed in neurons (at protein level). Expressed in brain and testis. Expressed in the dentate gyrus of the hippocampus.</text>
</comment>
<comment type="PTM">
    <text evidence="2">Methylated.</text>
</comment>
<comment type="PTM">
    <text evidence="3">Phosphorylated on tyrosine residues by FYN. Tyrosine phosphorylated by PTK6 and SRC (By similarity). Tyrosine phosphorylated by SRC during mitosis (By similarity).</text>
</comment>
<comment type="similarity">
    <text evidence="8">Belongs to the KHDRBS family.</text>
</comment>
<gene>
    <name type="primary">Khdrbs2</name>
    <name type="synonym">Slm1</name>
</gene>
<protein>
    <recommendedName>
        <fullName>KH domain-containing, RNA-binding, signal transduction-associated protein 2</fullName>
    </recommendedName>
    <alternativeName>
        <fullName>Sam68-like mammalian protein 1</fullName>
        <shortName>SLM-1</shortName>
        <shortName>rSLM-1</shortName>
    </alternativeName>
</protein>
<name>KHDR2_RAT</name>
<keyword id="KW-0488">Methylation</keyword>
<keyword id="KW-0507">mRNA processing</keyword>
<keyword id="KW-0539">Nucleus</keyword>
<keyword id="KW-0597">Phosphoprotein</keyword>
<keyword id="KW-1185">Reference proteome</keyword>
<keyword id="KW-0694">RNA-binding</keyword>
<keyword id="KW-0729">SH3-binding</keyword>
<keyword id="KW-0804">Transcription</keyword>
<keyword id="KW-0805">Transcription regulation</keyword>
<dbReference type="EMBL" id="AF305618">
    <property type="protein sequence ID" value="AAL09360.1"/>
    <property type="molecule type" value="mRNA"/>
</dbReference>
<dbReference type="RefSeq" id="NP_579852.1">
    <property type="nucleotide sequence ID" value="NM_133318.2"/>
</dbReference>
<dbReference type="SMR" id="Q920F3"/>
<dbReference type="FunCoup" id="Q920F3">
    <property type="interactions" value="2167"/>
</dbReference>
<dbReference type="STRING" id="10116.ENSRNOP00000016579"/>
<dbReference type="CarbonylDB" id="Q920F3"/>
<dbReference type="GlyGen" id="Q920F3">
    <property type="glycosylation" value="3 sites"/>
</dbReference>
<dbReference type="iPTMnet" id="Q920F3"/>
<dbReference type="PhosphoSitePlus" id="Q920F3"/>
<dbReference type="jPOST" id="Q920F3"/>
<dbReference type="PaxDb" id="10116-ENSRNOP00000016579"/>
<dbReference type="Ensembl" id="ENSRNOT00000016578.6">
    <property type="protein sequence ID" value="ENSRNOP00000016579.3"/>
    <property type="gene ID" value="ENSRNOG00000012284.7"/>
</dbReference>
<dbReference type="GeneID" id="170843"/>
<dbReference type="KEGG" id="rno:170843"/>
<dbReference type="UCSC" id="RGD:621738">
    <property type="organism name" value="rat"/>
</dbReference>
<dbReference type="AGR" id="RGD:621738"/>
<dbReference type="CTD" id="202559"/>
<dbReference type="RGD" id="621738">
    <property type="gene designation" value="Khdrbs2"/>
</dbReference>
<dbReference type="eggNOG" id="KOG1588">
    <property type="taxonomic scope" value="Eukaryota"/>
</dbReference>
<dbReference type="GeneTree" id="ENSGT00940000157134"/>
<dbReference type="HOGENOM" id="CLU_034976_0_0_1"/>
<dbReference type="InParanoid" id="Q920F3"/>
<dbReference type="OMA" id="YGHGVNE"/>
<dbReference type="OrthoDB" id="6777263at2759"/>
<dbReference type="PhylomeDB" id="Q920F3"/>
<dbReference type="TreeFam" id="TF314878"/>
<dbReference type="Reactome" id="R-RNO-8849468">
    <property type="pathway name" value="PTK6 Regulates Proteins Involved in RNA Processing"/>
</dbReference>
<dbReference type="PRO" id="PR:Q920F3"/>
<dbReference type="Proteomes" id="UP000002494">
    <property type="component" value="Chromosome 9"/>
</dbReference>
<dbReference type="Bgee" id="ENSRNOG00000012284">
    <property type="expression patterns" value="Expressed in frontal cortex and 2 other cell types or tissues"/>
</dbReference>
<dbReference type="GO" id="GO:0005634">
    <property type="term" value="C:nucleus"/>
    <property type="evidence" value="ECO:0000318"/>
    <property type="project" value="GO_Central"/>
</dbReference>
<dbReference type="GO" id="GO:0003729">
    <property type="term" value="F:mRNA binding"/>
    <property type="evidence" value="ECO:0000318"/>
    <property type="project" value="GO_Central"/>
</dbReference>
<dbReference type="GO" id="GO:0008143">
    <property type="term" value="F:poly(A) binding"/>
    <property type="evidence" value="ECO:0000266"/>
    <property type="project" value="RGD"/>
</dbReference>
<dbReference type="GO" id="GO:0008266">
    <property type="term" value="F:poly(U) RNA binding"/>
    <property type="evidence" value="ECO:0000266"/>
    <property type="project" value="RGD"/>
</dbReference>
<dbReference type="GO" id="GO:0042169">
    <property type="term" value="F:SH2 domain binding"/>
    <property type="evidence" value="ECO:0000266"/>
    <property type="project" value="RGD"/>
</dbReference>
<dbReference type="GO" id="GO:0017124">
    <property type="term" value="F:SH3 domain binding"/>
    <property type="evidence" value="ECO:0000266"/>
    <property type="project" value="RGD"/>
</dbReference>
<dbReference type="GO" id="GO:0006397">
    <property type="term" value="P:mRNA processing"/>
    <property type="evidence" value="ECO:0007669"/>
    <property type="project" value="UniProtKB-KW"/>
</dbReference>
<dbReference type="GO" id="GO:0000381">
    <property type="term" value="P:regulation of alternative mRNA splicing, via spliceosome"/>
    <property type="evidence" value="ECO:0000318"/>
    <property type="project" value="GO_Central"/>
</dbReference>
<dbReference type="GO" id="GO:0048024">
    <property type="term" value="P:regulation of mRNA splicing, via spliceosome"/>
    <property type="evidence" value="ECO:0000266"/>
    <property type="project" value="RGD"/>
</dbReference>
<dbReference type="CDD" id="cd22469">
    <property type="entry name" value="KH-I_KHDRBS2"/>
    <property type="match status" value="1"/>
</dbReference>
<dbReference type="FunFam" id="3.30.1370.10:FF:000030">
    <property type="entry name" value="KH domain-containing, RNA-binding, signal transduction-associated protein 3 isoformX2"/>
    <property type="match status" value="1"/>
</dbReference>
<dbReference type="Gene3D" id="3.30.1370.10">
    <property type="entry name" value="K Homology domain, type 1"/>
    <property type="match status" value="1"/>
</dbReference>
<dbReference type="InterPro" id="IPR045071">
    <property type="entry name" value="BBP-like"/>
</dbReference>
<dbReference type="InterPro" id="IPR055256">
    <property type="entry name" value="KH_1_KHDC4/BBP-like"/>
</dbReference>
<dbReference type="InterPro" id="IPR004087">
    <property type="entry name" value="KH_dom"/>
</dbReference>
<dbReference type="InterPro" id="IPR036612">
    <property type="entry name" value="KH_dom_type_1_sf"/>
</dbReference>
<dbReference type="InterPro" id="IPR032571">
    <property type="entry name" value="Qua1_dom"/>
</dbReference>
<dbReference type="InterPro" id="IPR032335">
    <property type="entry name" value="Sam68-YY"/>
</dbReference>
<dbReference type="PANTHER" id="PTHR11208:SF34">
    <property type="entry name" value="KH DOMAIN-CONTAINING, RNA-BINDING, SIGNAL TRANSDUCTION-ASSOCIATED PROTEIN 2"/>
    <property type="match status" value="1"/>
</dbReference>
<dbReference type="PANTHER" id="PTHR11208">
    <property type="entry name" value="RNA-BINDING PROTEIN RELATED"/>
    <property type="match status" value="1"/>
</dbReference>
<dbReference type="Pfam" id="PF22675">
    <property type="entry name" value="KH-I_KHDC4-BBP"/>
    <property type="match status" value="1"/>
</dbReference>
<dbReference type="Pfam" id="PF16274">
    <property type="entry name" value="Qua1"/>
    <property type="match status" value="1"/>
</dbReference>
<dbReference type="Pfam" id="PF16568">
    <property type="entry name" value="Sam68-YY"/>
    <property type="match status" value="1"/>
</dbReference>
<dbReference type="SMART" id="SM00322">
    <property type="entry name" value="KH"/>
    <property type="match status" value="1"/>
</dbReference>
<dbReference type="SUPFAM" id="SSF54791">
    <property type="entry name" value="Eukaryotic type KH-domain (KH-domain type I)"/>
    <property type="match status" value="1"/>
</dbReference>
<dbReference type="PROSITE" id="PS50084">
    <property type="entry name" value="KH_TYPE_1"/>
    <property type="match status" value="1"/>
</dbReference>
<reference key="1">
    <citation type="journal article" date="2004" name="Mol. Cell. Neurosci.">
        <title>p59(fyn)-mediated phosphorylation regulates the activity of the tissue-specific splicing factor rSLM-1.</title>
        <authorList>
            <person name="Stoss O."/>
            <person name="Novoyatleva T."/>
            <person name="Gencheva M."/>
            <person name="Olbrich M."/>
            <person name="Benderska N."/>
            <person name="Stamm S."/>
        </authorList>
    </citation>
    <scope>NUCLEOTIDE SEQUENCE [MRNA]</scope>
    <scope>FUNCTION</scope>
    <scope>SUBUNIT</scope>
    <scope>INTERACTION WITH RBMX; SAFB; SFRS9 AND YTHDC1</scope>
    <scope>PHOSPHORYLATION</scope>
    <scope>TISSUE SPECIFICITY</scope>
    <source>
        <tissue>Brain</tissue>
    </source>
</reference>
<reference key="2">
    <citation type="journal article" date="2009" name="J. Biol. Chem.">
        <title>Heterogeneous nuclear ribonucleoprotein G regulates splice site selection by binding to CC(A/C)-rich regions in pre-mRNA.</title>
        <authorList>
            <person name="Heinrich B."/>
            <person name="Zhang Z."/>
            <person name="Raitskin O."/>
            <person name="Hiller M."/>
            <person name="Benderska N."/>
            <person name="Hartmann A.M."/>
            <person name="Bracco L."/>
            <person name="Elliott D."/>
            <person name="Ben-Ari S."/>
            <person name="Soreq H."/>
            <person name="Sperling J."/>
            <person name="Sperling R."/>
            <person name="Stamm S."/>
        </authorList>
    </citation>
    <scope>FUNCTION</scope>
    <scope>INTERACTION WITH RBMX</scope>
</reference>
<evidence type="ECO:0000250" key="1"/>
<evidence type="ECO:0000250" key="2">
    <source>
        <dbReference type="UniProtKB" id="Q5VWX1"/>
    </source>
</evidence>
<evidence type="ECO:0000250" key="3">
    <source>
        <dbReference type="UniProtKB" id="Q9WU01"/>
    </source>
</evidence>
<evidence type="ECO:0000255" key="4">
    <source>
        <dbReference type="PROSITE-ProRule" id="PRU00117"/>
    </source>
</evidence>
<evidence type="ECO:0000256" key="5">
    <source>
        <dbReference type="SAM" id="MobiDB-lite"/>
    </source>
</evidence>
<evidence type="ECO:0000269" key="6">
    <source>
    </source>
</evidence>
<evidence type="ECO:0000269" key="7">
    <source>
    </source>
</evidence>
<evidence type="ECO:0000305" key="8"/>
<organism>
    <name type="scientific">Rattus norvegicus</name>
    <name type="common">Rat</name>
    <dbReference type="NCBI Taxonomy" id="10116"/>
    <lineage>
        <taxon>Eukaryota</taxon>
        <taxon>Metazoa</taxon>
        <taxon>Chordata</taxon>
        <taxon>Craniata</taxon>
        <taxon>Vertebrata</taxon>
        <taxon>Euteleostomi</taxon>
        <taxon>Mammalia</taxon>
        <taxon>Eutheria</taxon>
        <taxon>Euarchontoglires</taxon>
        <taxon>Glires</taxon>
        <taxon>Rodentia</taxon>
        <taxon>Myomorpha</taxon>
        <taxon>Muroidea</taxon>
        <taxon>Muridae</taxon>
        <taxon>Murinae</taxon>
        <taxon>Rattus</taxon>
    </lineage>
</organism>
<sequence>MGEEKYLPELMAEKDSLDPSFVHASRLLAEEIEKFQGSDGRKEDEEKKYLDVISNKNIKLSERVLIPVKQYPKFNFVGKLLGPRGNSLKRLQEETGAKMSILGKGSMRDKAKEEELRKSGEAKYAHLSDELHVLIEVFAPPGEAYSRMSHALEEIKKFLVPDYNDEIRQEQLRELSYLNGSEESGRGRGIRGRGIRITPTAPSRGRGGAVPPPPPPGRGVLTPRGTTVTRGALPVPPVARGVPTPRARGTAAVPGYRAPPPPAPEAYEEYGYDDGYGGEYDDQTYEAYDNSYVTPTQSVPEYYDYGHGVNEDAYDSYAPEEWTTTRSSLKAPPPRSARGGYREHPYGRY</sequence>
<feature type="chain" id="PRO_0000308955" description="KH domain-containing, RNA-binding, signal transduction-associated protein 2">
    <location>
        <begin position="1"/>
        <end position="349"/>
    </location>
</feature>
<feature type="domain" description="KH" evidence="4">
    <location>
        <begin position="65"/>
        <end position="135"/>
    </location>
</feature>
<feature type="region of interest" description="Disordered" evidence="5">
    <location>
        <begin position="181"/>
        <end position="263"/>
    </location>
</feature>
<feature type="region of interest" description="Disordered" evidence="5">
    <location>
        <begin position="320"/>
        <end position="349"/>
    </location>
</feature>
<feature type="compositionally biased region" description="Low complexity" evidence="5">
    <location>
        <begin position="218"/>
        <end position="231"/>
    </location>
</feature>
<feature type="compositionally biased region" description="Basic and acidic residues" evidence="5">
    <location>
        <begin position="340"/>
        <end position="349"/>
    </location>
</feature>
<feature type="modified residue" description="Omega-N-methylarginine" evidence="3">
    <location>
        <position position="230"/>
    </location>
</feature>
<feature type="modified residue" description="Omega-N-methylarginine" evidence="3">
    <location>
        <position position="240"/>
    </location>
</feature>
<proteinExistence type="evidence at protein level"/>
<accession>Q920F3</accession>